<proteinExistence type="inferred from homology"/>
<keyword id="KW-0066">ATP synthesis</keyword>
<keyword id="KW-1003">Cell membrane</keyword>
<keyword id="KW-0375">Hydrogen ion transport</keyword>
<keyword id="KW-0406">Ion transport</keyword>
<keyword id="KW-0472">Membrane</keyword>
<keyword id="KW-0813">Transport</keyword>
<reference key="1">
    <citation type="journal article" date="2009" name="Proc. Natl. Acad. Sci. U.S.A.">
        <title>Biogeography of the Sulfolobus islandicus pan-genome.</title>
        <authorList>
            <person name="Reno M.L."/>
            <person name="Held N.L."/>
            <person name="Fields C.J."/>
            <person name="Burke P.V."/>
            <person name="Whitaker R.J."/>
        </authorList>
    </citation>
    <scope>NUCLEOTIDE SEQUENCE [LARGE SCALE GENOMIC DNA]</scope>
    <source>
        <strain>Y.G.57.14 / Yellowstone #1</strain>
    </source>
</reference>
<gene>
    <name evidence="1" type="primary">atpB</name>
    <name type="ordered locus">YG5714_1569</name>
</gene>
<feature type="chain" id="PRO_1000205047" description="A-type ATP synthase subunit B">
    <location>
        <begin position="1"/>
        <end position="463"/>
    </location>
</feature>
<accession>C3NEU2</accession>
<name>AATB_SACI7</name>
<dbReference type="EMBL" id="CP001403">
    <property type="protein sequence ID" value="ACP45831.1"/>
    <property type="molecule type" value="Genomic_DNA"/>
</dbReference>
<dbReference type="RefSeq" id="WP_012711558.1">
    <property type="nucleotide sequence ID" value="NC_012622.1"/>
</dbReference>
<dbReference type="SMR" id="C3NEU2"/>
<dbReference type="KEGG" id="siy:YG5714_1569"/>
<dbReference type="HOGENOM" id="CLU_022916_0_0_2"/>
<dbReference type="Proteomes" id="UP000002308">
    <property type="component" value="Chromosome"/>
</dbReference>
<dbReference type="GO" id="GO:0005886">
    <property type="term" value="C:plasma membrane"/>
    <property type="evidence" value="ECO:0007669"/>
    <property type="project" value="UniProtKB-SubCell"/>
</dbReference>
<dbReference type="GO" id="GO:0033178">
    <property type="term" value="C:proton-transporting two-sector ATPase complex, catalytic domain"/>
    <property type="evidence" value="ECO:0007669"/>
    <property type="project" value="InterPro"/>
</dbReference>
<dbReference type="GO" id="GO:0005524">
    <property type="term" value="F:ATP binding"/>
    <property type="evidence" value="ECO:0007669"/>
    <property type="project" value="UniProtKB-UniRule"/>
</dbReference>
<dbReference type="GO" id="GO:0046933">
    <property type="term" value="F:proton-transporting ATP synthase activity, rotational mechanism"/>
    <property type="evidence" value="ECO:0007669"/>
    <property type="project" value="UniProtKB-UniRule"/>
</dbReference>
<dbReference type="GO" id="GO:0046961">
    <property type="term" value="F:proton-transporting ATPase activity, rotational mechanism"/>
    <property type="evidence" value="ECO:0007669"/>
    <property type="project" value="TreeGrafter"/>
</dbReference>
<dbReference type="GO" id="GO:0042777">
    <property type="term" value="P:proton motive force-driven plasma membrane ATP synthesis"/>
    <property type="evidence" value="ECO:0007669"/>
    <property type="project" value="UniProtKB-UniRule"/>
</dbReference>
<dbReference type="CDD" id="cd18112">
    <property type="entry name" value="ATP-synt_V_A-type_beta_C"/>
    <property type="match status" value="1"/>
</dbReference>
<dbReference type="CDD" id="cd18118">
    <property type="entry name" value="ATP-synt_V_A-type_beta_N"/>
    <property type="match status" value="1"/>
</dbReference>
<dbReference type="CDD" id="cd01135">
    <property type="entry name" value="V_A-ATPase_B"/>
    <property type="match status" value="1"/>
</dbReference>
<dbReference type="Gene3D" id="3.40.50.12240">
    <property type="match status" value="1"/>
</dbReference>
<dbReference type="HAMAP" id="MF_00310">
    <property type="entry name" value="ATP_synth_B_arch"/>
    <property type="match status" value="1"/>
</dbReference>
<dbReference type="InterPro" id="IPR055190">
    <property type="entry name" value="ATP-synt_VA_C"/>
</dbReference>
<dbReference type="InterPro" id="IPR020003">
    <property type="entry name" value="ATPase_a/bsu_AS"/>
</dbReference>
<dbReference type="InterPro" id="IPR005724">
    <property type="entry name" value="ATPase_A1-cplx_bsu"/>
</dbReference>
<dbReference type="InterPro" id="IPR004100">
    <property type="entry name" value="ATPase_F1/V1/A1_a/bsu_N"/>
</dbReference>
<dbReference type="InterPro" id="IPR000194">
    <property type="entry name" value="ATPase_F1/V1/A1_a/bsu_nucl-bd"/>
</dbReference>
<dbReference type="InterPro" id="IPR027417">
    <property type="entry name" value="P-loop_NTPase"/>
</dbReference>
<dbReference type="InterPro" id="IPR022879">
    <property type="entry name" value="V-ATPase_su_B/beta"/>
</dbReference>
<dbReference type="NCBIfam" id="TIGR01041">
    <property type="entry name" value="ATP_syn_B_arch"/>
    <property type="match status" value="1"/>
</dbReference>
<dbReference type="NCBIfam" id="NF003235">
    <property type="entry name" value="PRK04196.1"/>
    <property type="match status" value="1"/>
</dbReference>
<dbReference type="PANTHER" id="PTHR43389">
    <property type="entry name" value="V-TYPE PROTON ATPASE SUBUNIT B"/>
    <property type="match status" value="1"/>
</dbReference>
<dbReference type="PANTHER" id="PTHR43389:SF4">
    <property type="entry name" value="V-TYPE PROTON ATPASE SUBUNIT B"/>
    <property type="match status" value="1"/>
</dbReference>
<dbReference type="Pfam" id="PF00006">
    <property type="entry name" value="ATP-synt_ab"/>
    <property type="match status" value="1"/>
</dbReference>
<dbReference type="Pfam" id="PF02874">
    <property type="entry name" value="ATP-synt_ab_N"/>
    <property type="match status" value="1"/>
</dbReference>
<dbReference type="Pfam" id="PF22919">
    <property type="entry name" value="ATP-synt_VA_C"/>
    <property type="match status" value="1"/>
</dbReference>
<dbReference type="PIRSF" id="PIRSF039114">
    <property type="entry name" value="V-ATPsynth_beta/V-ATPase_B"/>
    <property type="match status" value="1"/>
</dbReference>
<dbReference type="SUPFAM" id="SSF52540">
    <property type="entry name" value="P-loop containing nucleoside triphosphate hydrolases"/>
    <property type="match status" value="1"/>
</dbReference>
<dbReference type="PROSITE" id="PS00152">
    <property type="entry name" value="ATPASE_ALPHA_BETA"/>
    <property type="match status" value="1"/>
</dbReference>
<evidence type="ECO:0000255" key="1">
    <source>
        <dbReference type="HAMAP-Rule" id="MF_00310"/>
    </source>
</evidence>
<organism>
    <name type="scientific">Saccharolobus islandicus (strain Y.G.57.14 / Yellowstone #1)</name>
    <name type="common">Sulfolobus islandicus</name>
    <dbReference type="NCBI Taxonomy" id="439386"/>
    <lineage>
        <taxon>Archaea</taxon>
        <taxon>Thermoproteota</taxon>
        <taxon>Thermoprotei</taxon>
        <taxon>Sulfolobales</taxon>
        <taxon>Sulfolobaceae</taxon>
        <taxon>Saccharolobus</taxon>
    </lineage>
</organism>
<sequence>MLSVREFSNISMIKGPLIYVQGVTDASYNELVEIEMPNGEKRRGLVIDSQMGIAIVQVFEGTTGVSPTGTKIRMLGRGLEVKISEEMLGRIFNPLGDSLDNGPPVIKGEKRDINGSPLNPAAREYPEEFIQTGISAIDGLNALLRGQKLPIFSGSGLPANMLAAQIAKQATVRGEESNFAVVFAAIGARYDDALFFRKFFEETGAINRVAMIVSLANEPPVMKTLTPKTALTLAEYLAFEQDMHVLAILIDMTNYCEALREISAAREEVPGRGGYPGYMYTDLATIYERAGKVLGKKGSITQMPILTMPNDDITHPIPDLTGYITEGQIVLDRALYNKGIYPPINVLMSLSRLAKDGIGEGKTRDDHKDVSNQLFASYARAVDTRGLAAIIGEDSLSEVDRKYLLFGELFERKFVSQGFNENRDIETTLDIGWEILSVLPESELTNIKTQYIKKYHPNYRGKK</sequence>
<protein>
    <recommendedName>
        <fullName evidence="1">A-type ATP synthase subunit B</fullName>
    </recommendedName>
</protein>
<comment type="function">
    <text evidence="1">Component of the A-type ATP synthase that produces ATP from ADP in the presence of a proton gradient across the membrane. The B chain is a regulatory subunit.</text>
</comment>
<comment type="subunit">
    <text evidence="1">Has multiple subunits with at least A(3), B(3), C, D, E, F, H, I and proteolipid K(x).</text>
</comment>
<comment type="subcellular location">
    <subcellularLocation>
        <location evidence="1">Cell membrane</location>
        <topology evidence="1">Peripheral membrane protein</topology>
    </subcellularLocation>
</comment>
<comment type="similarity">
    <text evidence="1">Belongs to the ATPase alpha/beta chains family.</text>
</comment>